<protein>
    <recommendedName>
        <fullName>Somatotropin</fullName>
    </recommendedName>
    <alternativeName>
        <fullName>Growth hormone</fullName>
    </alternativeName>
</protein>
<dbReference type="EMBL" id="AJ575422">
    <property type="protein sequence ID" value="CAE01394.1"/>
    <property type="molecule type" value="Genomic_DNA"/>
</dbReference>
<dbReference type="EMBL" id="AJ575423">
    <property type="protein sequence ID" value="CAE01395.1"/>
    <property type="molecule type" value="Genomic_DNA"/>
</dbReference>
<dbReference type="SMR" id="Q7YQB8"/>
<dbReference type="GO" id="GO:0005615">
    <property type="term" value="C:extracellular space"/>
    <property type="evidence" value="ECO:0007669"/>
    <property type="project" value="InterPro"/>
</dbReference>
<dbReference type="GO" id="GO:0008083">
    <property type="term" value="F:growth factor activity"/>
    <property type="evidence" value="ECO:0007669"/>
    <property type="project" value="TreeGrafter"/>
</dbReference>
<dbReference type="GO" id="GO:0005131">
    <property type="term" value="F:growth hormone receptor binding"/>
    <property type="evidence" value="ECO:0007669"/>
    <property type="project" value="InterPro"/>
</dbReference>
<dbReference type="GO" id="GO:0005179">
    <property type="term" value="F:hormone activity"/>
    <property type="evidence" value="ECO:0007669"/>
    <property type="project" value="UniProtKB-KW"/>
</dbReference>
<dbReference type="GO" id="GO:0046872">
    <property type="term" value="F:metal ion binding"/>
    <property type="evidence" value="ECO:0007669"/>
    <property type="project" value="UniProtKB-KW"/>
</dbReference>
<dbReference type="GO" id="GO:0048513">
    <property type="term" value="P:animal organ development"/>
    <property type="evidence" value="ECO:0007669"/>
    <property type="project" value="TreeGrafter"/>
</dbReference>
<dbReference type="GO" id="GO:0060396">
    <property type="term" value="P:growth hormone receptor signaling pathway"/>
    <property type="evidence" value="ECO:0007669"/>
    <property type="project" value="TreeGrafter"/>
</dbReference>
<dbReference type="GO" id="GO:0045927">
    <property type="term" value="P:positive regulation of growth"/>
    <property type="evidence" value="ECO:0007669"/>
    <property type="project" value="TreeGrafter"/>
</dbReference>
<dbReference type="GO" id="GO:0046427">
    <property type="term" value="P:positive regulation of receptor signaling pathway via JAK-STAT"/>
    <property type="evidence" value="ECO:0007669"/>
    <property type="project" value="TreeGrafter"/>
</dbReference>
<dbReference type="GO" id="GO:0031667">
    <property type="term" value="P:response to nutrient levels"/>
    <property type="evidence" value="ECO:0007669"/>
    <property type="project" value="TreeGrafter"/>
</dbReference>
<dbReference type="CDD" id="cd10285">
    <property type="entry name" value="somatotropin_like"/>
    <property type="match status" value="1"/>
</dbReference>
<dbReference type="FunFam" id="1.20.1250.10:FF:000002">
    <property type="entry name" value="Growth hormone"/>
    <property type="match status" value="1"/>
</dbReference>
<dbReference type="Gene3D" id="1.20.1250.10">
    <property type="match status" value="1"/>
</dbReference>
<dbReference type="InterPro" id="IPR009079">
    <property type="entry name" value="4_helix_cytokine-like_core"/>
</dbReference>
<dbReference type="InterPro" id="IPR034975">
    <property type="entry name" value="Somatotropin"/>
</dbReference>
<dbReference type="InterPro" id="IPR001400">
    <property type="entry name" value="Somatotropin/Prolactin"/>
</dbReference>
<dbReference type="InterPro" id="IPR018116">
    <property type="entry name" value="Somatotropin_CS"/>
</dbReference>
<dbReference type="PANTHER" id="PTHR11417:SF2">
    <property type="entry name" value="SOMATOTROPIN"/>
    <property type="match status" value="1"/>
</dbReference>
<dbReference type="PANTHER" id="PTHR11417">
    <property type="entry name" value="SOMATOTROPIN,PROLACTIN"/>
    <property type="match status" value="1"/>
</dbReference>
<dbReference type="Pfam" id="PF00103">
    <property type="entry name" value="Hormone_1"/>
    <property type="match status" value="1"/>
</dbReference>
<dbReference type="PRINTS" id="PR00836">
    <property type="entry name" value="SOMATOTROPIN"/>
</dbReference>
<dbReference type="SUPFAM" id="SSF47266">
    <property type="entry name" value="4-helical cytokines"/>
    <property type="match status" value="1"/>
</dbReference>
<dbReference type="PROSITE" id="PS00266">
    <property type="entry name" value="SOMATOTROPIN_1"/>
    <property type="match status" value="1"/>
</dbReference>
<dbReference type="PROSITE" id="PS00338">
    <property type="entry name" value="SOMATOTROPIN_2"/>
    <property type="match status" value="1"/>
</dbReference>
<keyword id="KW-1015">Disulfide bond</keyword>
<keyword id="KW-0372">Hormone</keyword>
<keyword id="KW-0479">Metal-binding</keyword>
<keyword id="KW-0597">Phosphoprotein</keyword>
<keyword id="KW-0964">Secreted</keyword>
<keyword id="KW-0732">Signal</keyword>
<keyword id="KW-0862">Zinc</keyword>
<feature type="signal peptide" evidence="1">
    <location>
        <begin position="1"/>
        <end position="26"/>
    </location>
</feature>
<feature type="chain" id="PRO_0000032986" description="Somatotropin">
    <location>
        <begin position="27"/>
        <end position="216"/>
    </location>
</feature>
<feature type="binding site" evidence="1">
    <location>
        <position position="45"/>
    </location>
    <ligand>
        <name>Zn(2+)</name>
        <dbReference type="ChEBI" id="CHEBI:29105"/>
    </ligand>
</feature>
<feature type="binding site" evidence="1">
    <location>
        <position position="198"/>
    </location>
    <ligand>
        <name>Zn(2+)</name>
        <dbReference type="ChEBI" id="CHEBI:29105"/>
    </ligand>
</feature>
<feature type="modified residue" description="Phosphoserine" evidence="2">
    <location>
        <position position="131"/>
    </location>
</feature>
<feature type="disulfide bond" evidence="1">
    <location>
        <begin position="78"/>
        <end position="189"/>
    </location>
</feature>
<feature type="disulfide bond" evidence="1">
    <location>
        <begin position="206"/>
        <end position="214"/>
    </location>
</feature>
<accession>Q7YQB8</accession>
<evidence type="ECO:0000250" key="1"/>
<evidence type="ECO:0000250" key="2">
    <source>
        <dbReference type="UniProtKB" id="P01241"/>
    </source>
</evidence>
<evidence type="ECO:0000305" key="3"/>
<comment type="function">
    <text evidence="1">Plays an important role in growth control. Its major role in stimulating body growth is to stimulate the liver and other tissues to secrete IGF1. It stimulates both the differentiation and proliferation of myoblasts. It also stimulates amino acid uptake and protein synthesis in muscle and other tissues (By similarity).</text>
</comment>
<comment type="subcellular location">
    <subcellularLocation>
        <location>Secreted</location>
    </subcellularLocation>
</comment>
<comment type="similarity">
    <text evidence="3">Belongs to the somatotropin/prolactin family.</text>
</comment>
<name>SOMA_HIPAM</name>
<proteinExistence type="inferred from homology"/>
<gene>
    <name type="primary">GH1</name>
</gene>
<gene>
    <name type="primary">GH2</name>
</gene>
<reference key="1">
    <citation type="journal article" date="2004" name="J. Mol. Evol.">
        <title>Episodic molecular evolution of pituitary growth hormone in Cetartiodactyla.</title>
        <authorList>
            <person name="Maniou Z."/>
            <person name="Wallis O.C."/>
            <person name="Wallis M."/>
        </authorList>
    </citation>
    <scope>NUCLEOTIDE SEQUENCE [GENOMIC DNA]</scope>
</reference>
<sequence length="216" mass="24477">MAAGPRTSVLLAFALLCLPWTQEVGAFPAMPLSSLFANAVLRAQHLHQLAADTYKEFERAYIPEGQRYSIQNTQAAFCFSETIPAPTGKDEAQQRSDVELLRFSLLLIQSWLGPVQFLSRVFTNSLVFGTSDRVYEKLKDLEEGIQALMRELEDGSPRAGQILKQTYDKFDTNMRSDDALLKNYGLLSCFKKDLHKAETYLRVMKCRRFVESSCAF</sequence>
<organism>
    <name type="scientific">Hippopotamus amphibius</name>
    <name type="common">Hippopotamus</name>
    <dbReference type="NCBI Taxonomy" id="9833"/>
    <lineage>
        <taxon>Eukaryota</taxon>
        <taxon>Metazoa</taxon>
        <taxon>Chordata</taxon>
        <taxon>Craniata</taxon>
        <taxon>Vertebrata</taxon>
        <taxon>Euteleostomi</taxon>
        <taxon>Mammalia</taxon>
        <taxon>Eutheria</taxon>
        <taxon>Laurasiatheria</taxon>
        <taxon>Artiodactyla</taxon>
        <taxon>Whippomorpha</taxon>
        <taxon>Ancodonta</taxon>
        <taxon>Hippopotamidae</taxon>
        <taxon>Hippopotamus</taxon>
    </lineage>
</organism>